<reference key="1">
    <citation type="journal article" date="2008" name="PLoS ONE">
        <title>Discovery of a distinct superfamily of Kunitz-type toxin (KTT) from tarantulas.</title>
        <authorList>
            <person name="Yuan C.-H."/>
            <person name="He Q.-Y."/>
            <person name="Peng K."/>
            <person name="Diao J.-B."/>
            <person name="Jiang L.-P."/>
            <person name="Tang X."/>
            <person name="Liang S.-P."/>
        </authorList>
    </citation>
    <scope>NUCLEOTIDE SEQUENCE [MRNA]</scope>
    <source>
        <tissue>Venom gland</tissue>
    </source>
</reference>
<reference evidence="9" key="2">
    <citation type="journal article" date="2014" name="Peptides">
        <title>Molecular cloning, bioinformatics analysis and functional characterization of HWTX-XI toxin superfamily from the spider Ornithoctonus huwena.</title>
        <authorList>
            <person name="Jiang L."/>
            <person name="Deng M."/>
            <person name="Duan Z."/>
            <person name="Tang X."/>
            <person name="Liang S."/>
        </authorList>
    </citation>
    <scope>NUCLEOTIDE SEQUENCE [GENOMIC DNA]</scope>
    <scope>FUNCTION</scope>
    <scope>RECOMBINANT EXPRESSION</scope>
</reference>
<accession>P0DJ81</accession>
<accession>A0A023WAC9</accession>
<organism>
    <name type="scientific">Cyriopagopus schmidti</name>
    <name type="common">Chinese bird spider</name>
    <name type="synonym">Haplopelma schmidti</name>
    <dbReference type="NCBI Taxonomy" id="29017"/>
    <lineage>
        <taxon>Eukaryota</taxon>
        <taxon>Metazoa</taxon>
        <taxon>Ecdysozoa</taxon>
        <taxon>Arthropoda</taxon>
        <taxon>Chelicerata</taxon>
        <taxon>Arachnida</taxon>
        <taxon>Araneae</taxon>
        <taxon>Mygalomorphae</taxon>
        <taxon>Theraphosidae</taxon>
        <taxon>Cyriopagopus</taxon>
    </lineage>
</organism>
<evidence type="ECO:0000250" key="1"/>
<evidence type="ECO:0000255" key="2"/>
<evidence type="ECO:0000255" key="3">
    <source>
        <dbReference type="PROSITE-ProRule" id="PRU00031"/>
    </source>
</evidence>
<evidence type="ECO:0000269" key="4">
    <source>
    </source>
</evidence>
<evidence type="ECO:0000303" key="5">
    <source>
    </source>
</evidence>
<evidence type="ECO:0000303" key="6">
    <source>
    </source>
</evidence>
<evidence type="ECO:0000305" key="7"/>
<evidence type="ECO:0000305" key="8">
    <source>
    </source>
</evidence>
<evidence type="ECO:0000312" key="9">
    <source>
        <dbReference type="EMBL" id="AHY30314.1"/>
    </source>
</evidence>
<keyword id="KW-1015">Disulfide bond</keyword>
<keyword id="KW-0646">Protease inhibitor</keyword>
<keyword id="KW-0964">Secreted</keyword>
<keyword id="KW-0722">Serine protease inhibitor</keyword>
<keyword id="KW-0732">Signal</keyword>
<proteinExistence type="inferred from homology"/>
<sequence>MGTARFLSAVLLLSVLLMVTFPALLSAEYHDGRVDICSLPSDSGDRLRFFEMWYFDGTTCTKFVYGGYGGNDNRFPTEKACMKRCAKA</sequence>
<protein>
    <recommendedName>
        <fullName>Kunitz-type U15-theraphotoxin-Hs1e</fullName>
        <shortName>U15-TRTX-Hs1e</shortName>
    </recommendedName>
    <alternativeName>
        <fullName evidence="6">Huwentoxin HW11c24</fullName>
    </alternativeName>
    <alternativeName>
        <fullName evidence="5">Kunitz-type serine protease inhibitor HWTX-XI-IS24</fullName>
    </alternativeName>
</protein>
<name>VKT24_CYRSC</name>
<dbReference type="EMBL" id="KF160303">
    <property type="protein sequence ID" value="AHY30314.1"/>
    <property type="molecule type" value="Genomic_DNA"/>
</dbReference>
<dbReference type="SMR" id="P0DJ81"/>
<dbReference type="ArachnoServer" id="AS001841">
    <property type="toxin name" value="U15-theraphotoxin-Hs1e"/>
</dbReference>
<dbReference type="GO" id="GO:0005576">
    <property type="term" value="C:extracellular region"/>
    <property type="evidence" value="ECO:0007669"/>
    <property type="project" value="UniProtKB-SubCell"/>
</dbReference>
<dbReference type="GO" id="GO:0015459">
    <property type="term" value="F:potassium channel regulator activity"/>
    <property type="evidence" value="ECO:0007669"/>
    <property type="project" value="UniProtKB-KW"/>
</dbReference>
<dbReference type="GO" id="GO:0004867">
    <property type="term" value="F:serine-type endopeptidase inhibitor activity"/>
    <property type="evidence" value="ECO:0007669"/>
    <property type="project" value="UniProtKB-KW"/>
</dbReference>
<dbReference type="GO" id="GO:0090729">
    <property type="term" value="F:toxin activity"/>
    <property type="evidence" value="ECO:0007669"/>
    <property type="project" value="UniProtKB-KW"/>
</dbReference>
<dbReference type="GO" id="GO:0044562">
    <property type="term" value="P:envenomation resulting in negative regulation of voltage-gated potassium channel activity in another organism"/>
    <property type="evidence" value="ECO:0007669"/>
    <property type="project" value="UniProtKB-ARBA"/>
</dbReference>
<dbReference type="CDD" id="cd22598">
    <property type="entry name" value="Kunitz_huwentoxin"/>
    <property type="match status" value="1"/>
</dbReference>
<dbReference type="FunFam" id="4.10.410.10:FF:000020">
    <property type="entry name" value="Collagen, type VI, alpha 3"/>
    <property type="match status" value="1"/>
</dbReference>
<dbReference type="Gene3D" id="4.10.410.10">
    <property type="entry name" value="Pancreatic trypsin inhibitor Kunitz domain"/>
    <property type="match status" value="1"/>
</dbReference>
<dbReference type="InterPro" id="IPR002223">
    <property type="entry name" value="Kunitz_BPTI"/>
</dbReference>
<dbReference type="InterPro" id="IPR036880">
    <property type="entry name" value="Kunitz_BPTI_sf"/>
</dbReference>
<dbReference type="InterPro" id="IPR051388">
    <property type="entry name" value="Serpin_venom_toxin"/>
</dbReference>
<dbReference type="PANTHER" id="PTHR46751">
    <property type="entry name" value="EPPIN"/>
    <property type="match status" value="1"/>
</dbReference>
<dbReference type="PANTHER" id="PTHR46751:SF1">
    <property type="entry name" value="WAP FOUR-DISULFIDE CORE DOMAIN PROTEIN 6A"/>
    <property type="match status" value="1"/>
</dbReference>
<dbReference type="Pfam" id="PF00014">
    <property type="entry name" value="Kunitz_BPTI"/>
    <property type="match status" value="1"/>
</dbReference>
<dbReference type="PRINTS" id="PR00759">
    <property type="entry name" value="BASICPTASE"/>
</dbReference>
<dbReference type="SMART" id="SM00131">
    <property type="entry name" value="KU"/>
    <property type="match status" value="1"/>
</dbReference>
<dbReference type="SUPFAM" id="SSF57362">
    <property type="entry name" value="BPTI-like"/>
    <property type="match status" value="1"/>
</dbReference>
<dbReference type="PROSITE" id="PS50279">
    <property type="entry name" value="BPTI_KUNITZ_2"/>
    <property type="match status" value="1"/>
</dbReference>
<feature type="signal peptide" evidence="2">
    <location>
        <begin position="1"/>
        <end position="27"/>
    </location>
</feature>
<feature type="propeptide" id="PRO_0000413836" evidence="1">
    <location>
        <begin position="28"/>
        <end position="33"/>
    </location>
</feature>
<feature type="chain" id="PRO_0000413837" description="Kunitz-type U15-theraphotoxin-Hs1e">
    <location>
        <begin position="34"/>
        <end position="88"/>
    </location>
</feature>
<feature type="domain" description="BPTI/Kunitz inhibitor" evidence="3">
    <location>
        <begin position="37"/>
        <end position="85"/>
    </location>
</feature>
<feature type="site" description="May bind Kv1" evidence="1">
    <location>
        <position position="39"/>
    </location>
</feature>
<feature type="site" description="Reactive bond for chymotrypsin" evidence="1">
    <location>
        <begin position="47"/>
        <end position="48"/>
    </location>
</feature>
<feature type="disulfide bond" evidence="3">
    <location>
        <begin position="37"/>
        <end position="85"/>
    </location>
</feature>
<feature type="disulfide bond" evidence="3">
    <location>
        <begin position="60"/>
        <end position="81"/>
    </location>
</feature>
<comment type="function">
    <text evidence="4">Serine protease inhibitor that inhibits trypsin (Ki=9.61 nM), kallikrein (Ki=24.8 nM), and chymotrypsin (PubMed:24418069).</text>
</comment>
<comment type="subcellular location">
    <subcellularLocation>
        <location evidence="8">Secreted</location>
    </subcellularLocation>
</comment>
<comment type="tissue specificity">
    <text evidence="8">Expressed by the venom gland.</text>
</comment>
<comment type="miscellaneous">
    <text evidence="4">Negative results: the recombinant toxin does not show activity on Kv1.1/KCNA1, Kv1.2/KCNA2, Kv1.3/KCNA3, Kv2.1/KCNB1 and Kv4.3/KCND3 channels, as well as on calcium (Cav) and sodium channels (Nav). It also does not show detectable activity on thrombin.</text>
</comment>
<comment type="similarity">
    <text evidence="7">Belongs to the venom Kunitz-type family. 03 (sub-Kunitz) subfamily.</text>
</comment>